<comment type="function">
    <text evidence="2 7 8">Serine/threonine kinase that plays a role in the response to environmental stress and cytokines such as TNF-alpha. Appears to act upstream of the JUN N-terminal pathway (PubMed:10669731, PubMed:9135144). Activator of the Hippo signaling pathway which plays a pivotal role in organ size control and tumor suppression by restricting proliferation and promoting apoptosis. MAP4Ks act in parallel to and are partially redundant with STK3/MST2 and STK4/MST2 in the phosphorylation and activation of LATS1/2, and establish MAP4Ks as components of the expanded Hippo pathway. Phosphorylates SMAD1 on Thr-322 (By similarity).</text>
</comment>
<comment type="catalytic activity">
    <reaction evidence="7 8">
        <text>L-seryl-[protein] + ATP = O-phospho-L-seryl-[protein] + ADP + H(+)</text>
        <dbReference type="Rhea" id="RHEA:17989"/>
        <dbReference type="Rhea" id="RHEA-COMP:9863"/>
        <dbReference type="Rhea" id="RHEA-COMP:11604"/>
        <dbReference type="ChEBI" id="CHEBI:15378"/>
        <dbReference type="ChEBI" id="CHEBI:29999"/>
        <dbReference type="ChEBI" id="CHEBI:30616"/>
        <dbReference type="ChEBI" id="CHEBI:83421"/>
        <dbReference type="ChEBI" id="CHEBI:456216"/>
        <dbReference type="EC" id="2.7.11.1"/>
    </reaction>
</comment>
<comment type="catalytic activity">
    <reaction evidence="7 8">
        <text>L-threonyl-[protein] + ATP = O-phospho-L-threonyl-[protein] + ADP + H(+)</text>
        <dbReference type="Rhea" id="RHEA:46608"/>
        <dbReference type="Rhea" id="RHEA-COMP:11060"/>
        <dbReference type="Rhea" id="RHEA-COMP:11605"/>
        <dbReference type="ChEBI" id="CHEBI:15378"/>
        <dbReference type="ChEBI" id="CHEBI:30013"/>
        <dbReference type="ChEBI" id="CHEBI:30616"/>
        <dbReference type="ChEBI" id="CHEBI:61977"/>
        <dbReference type="ChEBI" id="CHEBI:456216"/>
        <dbReference type="EC" id="2.7.11.1"/>
    </reaction>
</comment>
<comment type="cofactor">
    <cofactor evidence="7 8">
        <name>Mg(2+)</name>
        <dbReference type="ChEBI" id="CHEBI:18420"/>
    </cofactor>
</comment>
<comment type="subunit">
    <text evidence="1">Interacts with the SH3 domain of the adapter proteins Nck. Interacts (via its CNH regulatory domain) with ATL1 (via the N-terminal region). Interacts with RAP2A (GTP-bound form preferentially) (By similarity).</text>
</comment>
<comment type="interaction">
    <interactant intactId="EBI-644181">
        <id>P97820</id>
    </interactant>
    <interactant intactId="EBI-528768">
        <id>P26038</id>
        <label>MSN</label>
    </interactant>
    <organismsDiffer>true</organismsDiffer>
    <experiments>2</experiments>
</comment>
<comment type="subcellular location">
    <subcellularLocation>
        <location evidence="1">Cytoplasm</location>
    </subcellularLocation>
</comment>
<comment type="tissue specificity">
    <text evidence="8">Appears to be ubiquitous, expressed in all tissue types examined. Highest levels observed in heart and brain.</text>
</comment>
<comment type="similarity">
    <text evidence="9">Belongs to the protein kinase superfamily. STE Ser/Thr protein kinase family. STE20 subfamily.</text>
</comment>
<accession>P97820</accession>
<evidence type="ECO:0000250" key="1"/>
<evidence type="ECO:0000250" key="2">
    <source>
        <dbReference type="UniProtKB" id="O95819"/>
    </source>
</evidence>
<evidence type="ECO:0000255" key="3">
    <source>
        <dbReference type="PROSITE-ProRule" id="PRU00159"/>
    </source>
</evidence>
<evidence type="ECO:0000255" key="4">
    <source>
        <dbReference type="PROSITE-ProRule" id="PRU00795"/>
    </source>
</evidence>
<evidence type="ECO:0000255" key="5">
    <source>
        <dbReference type="PROSITE-ProRule" id="PRU10027"/>
    </source>
</evidence>
<evidence type="ECO:0000256" key="6">
    <source>
        <dbReference type="SAM" id="MobiDB-lite"/>
    </source>
</evidence>
<evidence type="ECO:0000269" key="7">
    <source>
    </source>
</evidence>
<evidence type="ECO:0000269" key="8">
    <source>
    </source>
</evidence>
<evidence type="ECO:0000305" key="9"/>
<evidence type="ECO:0000312" key="10">
    <source>
        <dbReference type="EMBL" id="AAC53165.1"/>
    </source>
</evidence>
<evidence type="ECO:0007744" key="11">
    <source>
    </source>
</evidence>
<sequence>MANDSPAKSLVDIDLSSLRDPAGIFELVEVVGNGTYGQVYKGRHVKTVTAAIKVMDVTEDEEEEITLEINMLKKYSHHRNIATYYGAFIKKSPPGHDDQLWLVMEFCGAGSITDLVKNTKGNTLKEDWIAYISREILRGLAHLHIHHVIHRDIKGQNVLLTENAEVKLVDFGVSAQLDRTVGRRNTFIGTPYWMAPEVIACDENPDATYDYRSDLWSCGITAIEMAEGGPPLCDMHPMRALFLIPRNPPPRLKSKKWSKKFFSFIEGCLVKNYMQRPSTEQLLKHPFIRDQPNERQVRIQLKDHIDRTRKKRGEKDETEYEYSGSEEEEEEVPEQEGEPSSIVNVPGESTLRRDFLRLQQENKERSEALRRQQLLQEQQLREQEEYKRQLLAERQKRIEQQKEQRRRLEEQQRREREARRQQEREQRRREQEEKRRLEELERRRKEEEERRRAEEEKRRVEREQEYIRRQLEEEQRHLEILQQQLLQEQAMLLHDHRRPHAQQQPPPPQQQDRSKPSFHAPEPKPHYDPADRAREVQWSHLASLKNNVSPVSRSHSFSDPSPKFAHHHLRSQDPCPPSRSEGLSQSSDSKSEVPEPTQKAWSRSDSDEVPPRVPVRTTSRSPVLSRRDSPLQGGGQQNSQAGQRNSTSSIEPRLLWERVEKLVPRPGSGSSSGSSNSGSQPGSHPGSQSGSGERFRVRSSSKSEGSPSPRQESAAKKPDDKKEVFRSLKPAGEVDLTALAKELRAVEDVRPPHKVTDYSSSSEESGTTDEEEEDVEQEGADDSTSGPEDTRAASSPNLSNGETESVKTMIVHDDVESEPAMTPSKEGTLIVRQTQSASSTLQKHKSSSSFTPFIDPRLLQISPSSGTTVTSVVGFSCDGLRPEAIRQDPTRKGSVVNVNPTNTRPQSDTPEIRKYKKRFNSEILCAALWGVNLLVGTESGLMLLDRSGQGKVYPLISRRRFQQMDVLEGLNVLVTISGKKDKLRVYYLSWLRNKILHNDPEVEKKQGWTTVGDLEGCVHYKVVKYERIKFLVIALKSSVEVYAWAPKPYHKFMAFKSFGELLHKPLLVDLTVEEGQRLKVIYGSCAGFHAVDVDSGSVYDIYLPTHIQCSIKPHAIIILPNTDGMELLVCYEDEGVYVNTYGRITKDVVLQWGEMPTSVAYIRSNQTMGWGEKAIEIRSVETGHLDGVFMHKRAQRLKFLCGRNDKVFFSSVRSGGSSQVYFMTLGRTSLLSW</sequence>
<feature type="initiator methionine" description="Removed" evidence="2">
    <location>
        <position position="1"/>
    </location>
</feature>
<feature type="chain" id="PRO_0000086281" description="Mitogen-activated protein kinase kinase kinase kinase 4">
    <location>
        <begin position="2"/>
        <end position="1233"/>
    </location>
</feature>
<feature type="domain" description="Protein kinase" evidence="3">
    <location>
        <begin position="25"/>
        <end position="289"/>
    </location>
</feature>
<feature type="domain" description="CNH" evidence="4">
    <location>
        <begin position="920"/>
        <end position="1207"/>
    </location>
</feature>
<feature type="region of interest" description="Disordered" evidence="6">
    <location>
        <begin position="305"/>
        <end position="348"/>
    </location>
</feature>
<feature type="region of interest" description="Disordered" evidence="6">
    <location>
        <begin position="401"/>
        <end position="463"/>
    </location>
</feature>
<feature type="region of interest" description="Disordered" evidence="6">
    <location>
        <begin position="489"/>
        <end position="805"/>
    </location>
</feature>
<feature type="region of interest" description="Mediates interaction with RAP2A" evidence="1">
    <location>
        <begin position="852"/>
        <end position="1206"/>
    </location>
</feature>
<feature type="compositionally biased region" description="Acidic residues" evidence="6">
    <location>
        <begin position="316"/>
        <end position="337"/>
    </location>
</feature>
<feature type="compositionally biased region" description="Basic and acidic residues" evidence="6">
    <location>
        <begin position="521"/>
        <end position="537"/>
    </location>
</feature>
<feature type="compositionally biased region" description="Polar residues" evidence="6">
    <location>
        <begin position="544"/>
        <end position="559"/>
    </location>
</feature>
<feature type="compositionally biased region" description="Basic and acidic residues" evidence="6">
    <location>
        <begin position="654"/>
        <end position="663"/>
    </location>
</feature>
<feature type="compositionally biased region" description="Low complexity" evidence="6">
    <location>
        <begin position="666"/>
        <end position="692"/>
    </location>
</feature>
<feature type="compositionally biased region" description="Basic and acidic residues" evidence="6">
    <location>
        <begin position="713"/>
        <end position="726"/>
    </location>
</feature>
<feature type="compositionally biased region" description="Basic and acidic residues" evidence="6">
    <location>
        <begin position="741"/>
        <end position="756"/>
    </location>
</feature>
<feature type="compositionally biased region" description="Acidic residues" evidence="6">
    <location>
        <begin position="766"/>
        <end position="781"/>
    </location>
</feature>
<feature type="compositionally biased region" description="Polar residues" evidence="6">
    <location>
        <begin position="783"/>
        <end position="803"/>
    </location>
</feature>
<feature type="active site" description="Proton acceptor" evidence="3 5">
    <location>
        <position position="152"/>
    </location>
</feature>
<feature type="binding site" evidence="3">
    <location>
        <begin position="31"/>
        <end position="39"/>
    </location>
    <ligand>
        <name>ATP</name>
        <dbReference type="ChEBI" id="CHEBI:30616"/>
    </ligand>
</feature>
<feature type="binding site" evidence="3">
    <location>
        <position position="53"/>
    </location>
    <ligand>
        <name>ATP</name>
        <dbReference type="ChEBI" id="CHEBI:30616"/>
    </ligand>
</feature>
<feature type="modified residue" description="N-acetylalanine" evidence="2">
    <location>
        <position position="2"/>
    </location>
</feature>
<feature type="modified residue" description="Phosphoserine" evidence="2">
    <location>
        <position position="5"/>
    </location>
</feature>
<feature type="modified residue" description="Phosphoserine" evidence="11">
    <location>
        <position position="323"/>
    </location>
</feature>
<feature type="modified residue" description="Phosphoserine" evidence="11">
    <location>
        <position position="325"/>
    </location>
</feature>
<feature type="modified residue" description="Phosphoserine" evidence="11">
    <location>
        <position position="543"/>
    </location>
</feature>
<feature type="modified residue" description="Phosphoserine" evidence="2">
    <location>
        <position position="619"/>
    </location>
</feature>
<feature type="modified residue" description="Phosphoserine" evidence="2">
    <location>
        <position position="621"/>
    </location>
</feature>
<feature type="modified residue" description="Phosphoserine" evidence="11">
    <location>
        <position position="629"/>
    </location>
</feature>
<feature type="modified residue" description="Phosphoserine" evidence="11">
    <location>
        <position position="646"/>
    </location>
</feature>
<feature type="modified residue" description="Phosphoserine" evidence="2">
    <location>
        <position position="691"/>
    </location>
</feature>
<feature type="modified residue" description="Phosphoserine" evidence="2">
    <location>
        <position position="703"/>
    </location>
</feature>
<feature type="modified residue" description="Phosphoserine" evidence="2">
    <location>
        <position position="706"/>
    </location>
</feature>
<feature type="modified residue" description="Phosphoserine" evidence="2">
    <location>
        <position position="785"/>
    </location>
</feature>
<feature type="modified residue" description="Phosphoserine" evidence="11">
    <location>
        <position position="794"/>
    </location>
</feature>
<feature type="modified residue" description="Phosphoserine" evidence="11">
    <location>
        <position position="795"/>
    </location>
</feature>
<feature type="modified residue" description="Phosphoserine" evidence="11">
    <location>
        <position position="799"/>
    </location>
</feature>
<feature type="modified residue" description="Phosphoserine" evidence="2">
    <location>
        <position position="817"/>
    </location>
</feature>
<feature type="modified residue" description="Phosphothreonine" evidence="2">
    <location>
        <position position="822"/>
    </location>
</feature>
<feature type="modified residue" description="Phosphoserine" evidence="2">
    <location>
        <position position="846"/>
    </location>
</feature>
<feature type="modified residue" description="Phosphoserine" evidence="2">
    <location>
        <position position="849"/>
    </location>
</feature>
<feature type="modified residue" description="Phosphoserine" evidence="11">
    <location>
        <position position="894"/>
    </location>
</feature>
<feature type="modified residue" description="Phosphoserine" evidence="2">
    <location>
        <position position="907"/>
    </location>
</feature>
<name>M4K4_MOUSE</name>
<keyword id="KW-0007">Acetylation</keyword>
<keyword id="KW-0067">ATP-binding</keyword>
<keyword id="KW-0963">Cytoplasm</keyword>
<keyword id="KW-0418">Kinase</keyword>
<keyword id="KW-0547">Nucleotide-binding</keyword>
<keyword id="KW-0597">Phosphoprotein</keyword>
<keyword id="KW-1185">Reference proteome</keyword>
<keyword id="KW-0723">Serine/threonine-protein kinase</keyword>
<keyword id="KW-0808">Transferase</keyword>
<proteinExistence type="evidence at protein level"/>
<protein>
    <recommendedName>
        <fullName>Mitogen-activated protein kinase kinase kinase kinase 4</fullName>
        <ecNumber>2.7.11.1</ecNumber>
    </recommendedName>
    <alternativeName>
        <fullName>HPK/GCK-like kinase HGK</fullName>
    </alternativeName>
    <alternativeName>
        <fullName>MAPK/ERK kinase kinase kinase 4</fullName>
        <shortName>MEK kinase kinase 4</shortName>
        <shortName>MEKKK 4</shortName>
    </alternativeName>
    <alternativeName>
        <fullName>Nck-interacting kinase</fullName>
    </alternativeName>
</protein>
<gene>
    <name type="primary">Map4k4</name>
    <name type="synonym">Nik</name>
</gene>
<dbReference type="EC" id="2.7.11.1"/>
<dbReference type="EMBL" id="U88984">
    <property type="protein sequence ID" value="AAC53165.1"/>
    <property type="molecule type" value="mRNA"/>
</dbReference>
<dbReference type="PIR" id="T30989">
    <property type="entry name" value="T30989"/>
</dbReference>
<dbReference type="RefSeq" id="NP_001239129.1">
    <property type="nucleotide sequence ID" value="NM_001252200.1"/>
</dbReference>
<dbReference type="RefSeq" id="NP_001239130.1">
    <property type="nucleotide sequence ID" value="NM_001252201.1"/>
</dbReference>
<dbReference type="RefSeq" id="NP_001239131.1">
    <property type="nucleotide sequence ID" value="NM_001252202.1"/>
</dbReference>
<dbReference type="RefSeq" id="NP_032722.2">
    <property type="nucleotide sequence ID" value="NM_008696.2"/>
</dbReference>
<dbReference type="SMR" id="P97820"/>
<dbReference type="BioGRID" id="205065">
    <property type="interactions" value="23"/>
</dbReference>
<dbReference type="CORUM" id="P97820"/>
<dbReference type="DIP" id="DIP-40973N"/>
<dbReference type="FunCoup" id="P97820">
    <property type="interactions" value="1415"/>
</dbReference>
<dbReference type="IntAct" id="P97820">
    <property type="interactions" value="12"/>
</dbReference>
<dbReference type="STRING" id="10090.ENSMUSP00000141400"/>
<dbReference type="GlyGen" id="P97820">
    <property type="glycosylation" value="2 sites, 1 N-linked glycan (1 site), 1 O-linked glycan (1 site)"/>
</dbReference>
<dbReference type="iPTMnet" id="P97820"/>
<dbReference type="PhosphoSitePlus" id="P97820"/>
<dbReference type="jPOST" id="P97820"/>
<dbReference type="PaxDb" id="10090-ENSMUSP00000126961"/>
<dbReference type="PeptideAtlas" id="P97820"/>
<dbReference type="ProteomicsDB" id="291988"/>
<dbReference type="Pumba" id="P97820"/>
<dbReference type="DNASU" id="26921"/>
<dbReference type="GeneID" id="26921"/>
<dbReference type="KEGG" id="mmu:26921"/>
<dbReference type="AGR" id="MGI:1349394"/>
<dbReference type="CTD" id="9448"/>
<dbReference type="MGI" id="MGI:1349394">
    <property type="gene designation" value="Map4k4"/>
</dbReference>
<dbReference type="eggNOG" id="KOG0587">
    <property type="taxonomic scope" value="Eukaryota"/>
</dbReference>
<dbReference type="InParanoid" id="P97820"/>
<dbReference type="PhylomeDB" id="P97820"/>
<dbReference type="Reactome" id="R-MMU-2559580">
    <property type="pathway name" value="Oxidative Stress Induced Senescence"/>
</dbReference>
<dbReference type="BioGRID-ORCS" id="26921">
    <property type="hits" value="9 hits in 82 CRISPR screens"/>
</dbReference>
<dbReference type="CD-CODE" id="CE726F99">
    <property type="entry name" value="Postsynaptic density"/>
</dbReference>
<dbReference type="ChiTaRS" id="Map4k4">
    <property type="organism name" value="mouse"/>
</dbReference>
<dbReference type="PRO" id="PR:P97820"/>
<dbReference type="Proteomes" id="UP000000589">
    <property type="component" value="Unplaced"/>
</dbReference>
<dbReference type="RNAct" id="P97820">
    <property type="molecule type" value="protein"/>
</dbReference>
<dbReference type="GO" id="GO:0005737">
    <property type="term" value="C:cytoplasm"/>
    <property type="evidence" value="ECO:0000250"/>
    <property type="project" value="UniProtKB"/>
</dbReference>
<dbReference type="GO" id="GO:0005925">
    <property type="term" value="C:focal adhesion"/>
    <property type="evidence" value="ECO:0000314"/>
    <property type="project" value="ARUK-UCL"/>
</dbReference>
<dbReference type="GO" id="GO:0005524">
    <property type="term" value="F:ATP binding"/>
    <property type="evidence" value="ECO:0000314"/>
    <property type="project" value="UniProtKB"/>
</dbReference>
<dbReference type="GO" id="GO:0106310">
    <property type="term" value="F:protein serine kinase activity"/>
    <property type="evidence" value="ECO:0007669"/>
    <property type="project" value="RHEA"/>
</dbReference>
<dbReference type="GO" id="GO:0004674">
    <property type="term" value="F:protein serine/threonine kinase activity"/>
    <property type="evidence" value="ECO:0000314"/>
    <property type="project" value="UniProtKB"/>
</dbReference>
<dbReference type="GO" id="GO:0032014">
    <property type="term" value="P:positive regulation of ARF protein signal transduction"/>
    <property type="evidence" value="ECO:0000315"/>
    <property type="project" value="ARUK-UCL"/>
</dbReference>
<dbReference type="GO" id="GO:0051894">
    <property type="term" value="P:positive regulation of focal adhesion assembly"/>
    <property type="evidence" value="ECO:0000315"/>
    <property type="project" value="ARUK-UCL"/>
</dbReference>
<dbReference type="GO" id="GO:0120183">
    <property type="term" value="P:positive regulation of focal adhesion disassembly"/>
    <property type="evidence" value="ECO:0000315"/>
    <property type="project" value="ARUK-UCL"/>
</dbReference>
<dbReference type="GO" id="GO:0046330">
    <property type="term" value="P:positive regulation of JNK cascade"/>
    <property type="evidence" value="ECO:0000314"/>
    <property type="project" value="UniProtKB"/>
</dbReference>
<dbReference type="GO" id="GO:0051549">
    <property type="term" value="P:positive regulation of keratinocyte migration"/>
    <property type="evidence" value="ECO:0000315"/>
    <property type="project" value="ARUK-UCL"/>
</dbReference>
<dbReference type="GO" id="GO:0006468">
    <property type="term" value="P:protein phosphorylation"/>
    <property type="evidence" value="ECO:0000314"/>
    <property type="project" value="UniProtKB"/>
</dbReference>
<dbReference type="GO" id="GO:0046328">
    <property type="term" value="P:regulation of JNK cascade"/>
    <property type="evidence" value="ECO:0000250"/>
    <property type="project" value="UniProtKB"/>
</dbReference>
<dbReference type="FunFam" id="1.10.510.10:FF:000003">
    <property type="entry name" value="TRAF2 and NCK-interacting protein kinase isoform 4"/>
    <property type="match status" value="1"/>
</dbReference>
<dbReference type="FunFam" id="3.30.200.20:FF:000006">
    <property type="entry name" value="TRAF2 and NCK-interacting protein kinase isoform 4"/>
    <property type="match status" value="1"/>
</dbReference>
<dbReference type="Gene3D" id="3.30.200.20">
    <property type="entry name" value="Phosphorylase Kinase, domain 1"/>
    <property type="match status" value="1"/>
</dbReference>
<dbReference type="Gene3D" id="1.10.510.10">
    <property type="entry name" value="Transferase(Phosphotransferase) domain 1"/>
    <property type="match status" value="1"/>
</dbReference>
<dbReference type="InterPro" id="IPR001180">
    <property type="entry name" value="CNH_dom"/>
</dbReference>
<dbReference type="InterPro" id="IPR011009">
    <property type="entry name" value="Kinase-like_dom_sf"/>
</dbReference>
<dbReference type="InterPro" id="IPR000719">
    <property type="entry name" value="Prot_kinase_dom"/>
</dbReference>
<dbReference type="InterPro" id="IPR017441">
    <property type="entry name" value="Protein_kinase_ATP_BS"/>
</dbReference>
<dbReference type="InterPro" id="IPR008271">
    <property type="entry name" value="Ser/Thr_kinase_AS"/>
</dbReference>
<dbReference type="InterPro" id="IPR051700">
    <property type="entry name" value="STE20_Ser-Thr_kinase"/>
</dbReference>
<dbReference type="PANTHER" id="PTHR47096">
    <property type="entry name" value="MISSHAPEN LIKE KINASE 1"/>
    <property type="match status" value="1"/>
</dbReference>
<dbReference type="PANTHER" id="PTHR47096:SF1">
    <property type="entry name" value="MISSHAPEN LIKE KINASE 1"/>
    <property type="match status" value="1"/>
</dbReference>
<dbReference type="Pfam" id="PF00780">
    <property type="entry name" value="CNH"/>
    <property type="match status" value="1"/>
</dbReference>
<dbReference type="Pfam" id="PF00069">
    <property type="entry name" value="Pkinase"/>
    <property type="match status" value="1"/>
</dbReference>
<dbReference type="SMART" id="SM00036">
    <property type="entry name" value="CNH"/>
    <property type="match status" value="1"/>
</dbReference>
<dbReference type="SMART" id="SM00220">
    <property type="entry name" value="S_TKc"/>
    <property type="match status" value="1"/>
</dbReference>
<dbReference type="SUPFAM" id="SSF56112">
    <property type="entry name" value="Protein kinase-like (PK-like)"/>
    <property type="match status" value="1"/>
</dbReference>
<dbReference type="PROSITE" id="PS50219">
    <property type="entry name" value="CNH"/>
    <property type="match status" value="1"/>
</dbReference>
<dbReference type="PROSITE" id="PS00107">
    <property type="entry name" value="PROTEIN_KINASE_ATP"/>
    <property type="match status" value="1"/>
</dbReference>
<dbReference type="PROSITE" id="PS50011">
    <property type="entry name" value="PROTEIN_KINASE_DOM"/>
    <property type="match status" value="1"/>
</dbReference>
<dbReference type="PROSITE" id="PS00108">
    <property type="entry name" value="PROTEIN_KINASE_ST"/>
    <property type="match status" value="1"/>
</dbReference>
<reference evidence="9" key="1">
    <citation type="journal article" date="1997" name="EMBO J.">
        <title>NIK is a new Ste20-related kinase that binds NCK and MEKK1 and activates the SAPK/JNK cascade via a conserved regulatory domain.</title>
        <authorList>
            <person name="Su Y.-C."/>
            <person name="Han J."/>
            <person name="Xu S."/>
            <person name="Cobb M."/>
            <person name="Skolnik E.Y."/>
        </authorList>
    </citation>
    <scope>NUCLEOTIDE SEQUENCE [MRNA]</scope>
    <scope>FUNCTION</scope>
    <scope>TISSUE SPECIFICITY</scope>
    <source>
        <tissue>Brain</tissue>
        <tissue>Embryo</tissue>
    </source>
</reference>
<reference evidence="9" key="2">
    <citation type="journal article" date="2000" name="Mol. Cell. Biol.">
        <title>Nck-interacting Ste20 kinase couples Eph receptors to c-Jun N-terminal kinase and integrin activation.</title>
        <authorList>
            <person name="Becker E."/>
            <person name="Huynh-Do U."/>
            <person name="Holland S."/>
            <person name="Pawson T."/>
            <person name="Daniel T.O."/>
            <person name="Skolnik E.Y."/>
        </authorList>
    </citation>
    <scope>FUNCTION</scope>
    <scope>INTERACTION WITH NCK</scope>
</reference>
<reference key="3">
    <citation type="journal article" date="2004" name="Mol. Cell. Proteomics">
        <title>Phosphoproteomic analysis of the developing mouse brain.</title>
        <authorList>
            <person name="Ballif B.A."/>
            <person name="Villen J."/>
            <person name="Beausoleil S.A."/>
            <person name="Schwartz D."/>
            <person name="Gygi S.P."/>
        </authorList>
    </citation>
    <scope>IDENTIFICATION BY MASS SPECTROMETRY [LARGE SCALE ANALYSIS]</scope>
    <source>
        <tissue>Embryonic brain</tissue>
    </source>
</reference>
<reference key="4">
    <citation type="journal article" date="2010" name="Cell">
        <title>A tissue-specific atlas of mouse protein phosphorylation and expression.</title>
        <authorList>
            <person name="Huttlin E.L."/>
            <person name="Jedrychowski M.P."/>
            <person name="Elias J.E."/>
            <person name="Goswami T."/>
            <person name="Rad R."/>
            <person name="Beausoleil S.A."/>
            <person name="Villen J."/>
            <person name="Haas W."/>
            <person name="Sowa M.E."/>
            <person name="Gygi S.P."/>
        </authorList>
    </citation>
    <scope>PHOSPHORYLATION [LARGE SCALE ANALYSIS] AT SER-323; SER-325; SER-543; SER-629; SER-646; SER-794; SER-795; SER-799 AND SER-894</scope>
    <scope>IDENTIFICATION BY MASS SPECTROMETRY [LARGE SCALE ANALYSIS]</scope>
    <source>
        <tissue>Brain</tissue>
        <tissue>Brown adipose tissue</tissue>
        <tissue>Heart</tissue>
        <tissue>Kidney</tissue>
        <tissue>Lung</tissue>
        <tissue>Pancreas</tissue>
        <tissue>Spleen</tissue>
        <tissue>Testis</tissue>
    </source>
</reference>
<organism evidence="10">
    <name type="scientific">Mus musculus</name>
    <name type="common">Mouse</name>
    <dbReference type="NCBI Taxonomy" id="10090"/>
    <lineage>
        <taxon>Eukaryota</taxon>
        <taxon>Metazoa</taxon>
        <taxon>Chordata</taxon>
        <taxon>Craniata</taxon>
        <taxon>Vertebrata</taxon>
        <taxon>Euteleostomi</taxon>
        <taxon>Mammalia</taxon>
        <taxon>Eutheria</taxon>
        <taxon>Euarchontoglires</taxon>
        <taxon>Glires</taxon>
        <taxon>Rodentia</taxon>
        <taxon>Myomorpha</taxon>
        <taxon>Muroidea</taxon>
        <taxon>Muridae</taxon>
        <taxon>Murinae</taxon>
        <taxon>Mus</taxon>
        <taxon>Mus</taxon>
    </lineage>
</organism>